<organism>
    <name type="scientific">Schizosaccharomyces pombe (strain 972 / ATCC 24843)</name>
    <name type="common">Fission yeast</name>
    <dbReference type="NCBI Taxonomy" id="284812"/>
    <lineage>
        <taxon>Eukaryota</taxon>
        <taxon>Fungi</taxon>
        <taxon>Dikarya</taxon>
        <taxon>Ascomycota</taxon>
        <taxon>Taphrinomycotina</taxon>
        <taxon>Schizosaccharomycetes</taxon>
        <taxon>Schizosaccharomycetales</taxon>
        <taxon>Schizosaccharomycetaceae</taxon>
        <taxon>Schizosaccharomyces</taxon>
    </lineage>
</organism>
<sequence length="1689" mass="189246">MNIAQPVSSEIKSVKFGIYDVDDVEKISVKQIVNPVLLDNLNHPTNGGLYDLALGPYLKNSVCATCHLDERYCPGHFGHIVLPIPAYHPLFFSQMYNLLRSTCLYCHHFKLSKVKVHLFFCRLKLLDYGLLNESEMVENVSLTEAIIKNSNGTPLEDGSDSEDSGLGHDDIAKDAATLMRIRDEFVAKSIADSRQNAHIDAQLTTLLLHERKKVVRAFYHAISSRKQCDNCQSFSPNFRKEGFAKIFEIPLSGKNLQFMEQTGKIRSDVLRDTSKKHHEDEGYDGDSDSSNESEVEGIDLFEEDPNPLKNKSKSPIAHGAKYMTSTEVRNHLRRLFVKENVVLSRLYAHKRGKPASADMFFLQNIAVPPTRFRPASKMGDEVHENIQNELLTRILQSSIQIASLSKDSTVEVNPDEKEGLERRSRAFELLINAFVQLQHDVNSLIDSNRNPSSGGQSRTVPPGIKQILEKKEGLFRKHMMGKRVNYAARSVISPDPNIETNEIGVPPVFATKLTYPEPVTLYNFNEMRNAVINGPHKWPGASHIQNEDGTLISLMPLTIEQRTALANQLLTPQSNLISSPYSYSRLINTNKKVYRHVRNGDMLILNRQPTLHKPSMMAHKARILPGEKTIRMHYANCNSYNADFDGDEMNMHFPQSTNARSEAQFIANTDSQYLVPTSGDPLRGLIQDHVVMGVWLTCKDTFYTRDEYQQLLFQALKPDETGMYGRIKTLPPAIQRPGIYWTGKQIISSVLLNLKPSDRPGLNLKSKAKVPGKYWSPDSEEGSVLFDDGELLCGILDKSSFGASAFGLVHSVHELYGPDIAGRLLSVLSRLFTAYAQMRGFTCRMDDLRLDEQGDNWRRQLLENGKSFGLEAASEYVGLSTDSPIALLNANLEEVYRDDEKLQGLDAAMKGKMNGLTSSIINKCIPDGLLTKFPYNHMQTMTVSGAKGSNVNVSQISCLLGQQELEGRRVPLMVSGKSLPSFVPYETSAKSGGFIASRFLTGIAPQEYYFHCMAGREGLIDTAVKTSRSGYLQRCLMKHLEGLCVQYDHTVRDSDGSIVQFHYGEDSLDVTKQKHLTQFEFSAKNYKSLIQKYKVKSVLSAVDSETASSYAKKALKKPYKYDPVLDKYPPSRYLGSVSEKFQRAVDEYTQKNPDKLIASKKESKLDDSLLNESKFKALMQLRYQQSLVDPGESVGVLASQSIGEPSTQMTLNTFHFAGFGAKNVTLGIPRLREIIMTASANIQTPTMTLRLNDGVSDKRASAFCKEVNKLVLSEVVRQVRVTEKISGQGSDEQSKTYAIRLDLYSRDEYQDEYGVLQEEIESTFSNRFLKILNRIIKSYLAKSKQRKSGGKDDTVPEVGQALKPLEDIDEAPIEGRAQEALEDEDNDATNEKMVSRSKQHASYEGPDEADKVALRQLKGSNKVEDVNMDEEEDEGFKSDESVSDFKERKLLEKQNTVSISERRELQLKTAKEILSNCKHLDFDYVNGEWATVELVFPINTEKLLMVSLVEKACSETVIHEIPGITRCFSKPPDSALDTVPKVITEGVNLKAIWEFYNEISMNDIYTNDIAAILRIYGVEAARNAIVHEVSSVFGVYGIAVDPRHLSLIADYMTFEGGYKAFNRMGIEYNTSPFAKMSFETTCHFLTEAALRGDVDDLSNPSSRLVVGRVGNFGTGSFDIFTPVVDSPAN</sequence>
<reference key="1">
    <citation type="journal article" date="1989" name="J. Cell Biol.">
        <title>Essential roles of the RNA polymerase I largest subunit and DNA topoisomerases in the formation of fission yeast nucleolus.</title>
        <authorList>
            <person name="Hirano T."/>
            <person name="Konoha G."/>
            <person name="Toda T."/>
            <person name="Yanagida M."/>
        </authorList>
    </citation>
    <scope>NUCLEOTIDE SEQUENCE [GENOMIC DNA]</scope>
    <scope>SUBCELLULAR LOCATION</scope>
</reference>
<reference key="2">
    <citation type="journal article" date="1988" name="Gene">
        <title>Cloning and sequence determination of the gene encoding the largest subunit of the fission yeast Schizosaccharomyces pombe RNA polymerase I.</title>
        <authorList>
            <person name="Yamagishi M."/>
            <person name="Nomura M."/>
        </authorList>
    </citation>
    <scope>NUCLEOTIDE SEQUENCE [GENOMIC DNA]</scope>
    <source>
        <strain>972 / HM123</strain>
    </source>
</reference>
<reference key="3">
    <citation type="journal article" date="2002" name="Nature">
        <title>The genome sequence of Schizosaccharomyces pombe.</title>
        <authorList>
            <person name="Wood V."/>
            <person name="Gwilliam R."/>
            <person name="Rajandream M.A."/>
            <person name="Lyne M.H."/>
            <person name="Lyne R."/>
            <person name="Stewart A."/>
            <person name="Sgouros J.G."/>
            <person name="Peat N."/>
            <person name="Hayles J."/>
            <person name="Baker S.G."/>
            <person name="Basham D."/>
            <person name="Bowman S."/>
            <person name="Brooks K."/>
            <person name="Brown D."/>
            <person name="Brown S."/>
            <person name="Chillingworth T."/>
            <person name="Churcher C.M."/>
            <person name="Collins M."/>
            <person name="Connor R."/>
            <person name="Cronin A."/>
            <person name="Davis P."/>
            <person name="Feltwell T."/>
            <person name="Fraser A."/>
            <person name="Gentles S."/>
            <person name="Goble A."/>
            <person name="Hamlin N."/>
            <person name="Harris D.E."/>
            <person name="Hidalgo J."/>
            <person name="Hodgson G."/>
            <person name="Holroyd S."/>
            <person name="Hornsby T."/>
            <person name="Howarth S."/>
            <person name="Huckle E.J."/>
            <person name="Hunt S."/>
            <person name="Jagels K."/>
            <person name="James K.D."/>
            <person name="Jones L."/>
            <person name="Jones M."/>
            <person name="Leather S."/>
            <person name="McDonald S."/>
            <person name="McLean J."/>
            <person name="Mooney P."/>
            <person name="Moule S."/>
            <person name="Mungall K.L."/>
            <person name="Murphy L.D."/>
            <person name="Niblett D."/>
            <person name="Odell C."/>
            <person name="Oliver K."/>
            <person name="O'Neil S."/>
            <person name="Pearson D."/>
            <person name="Quail M.A."/>
            <person name="Rabbinowitsch E."/>
            <person name="Rutherford K.M."/>
            <person name="Rutter S."/>
            <person name="Saunders D."/>
            <person name="Seeger K."/>
            <person name="Sharp S."/>
            <person name="Skelton J."/>
            <person name="Simmonds M.N."/>
            <person name="Squares R."/>
            <person name="Squares S."/>
            <person name="Stevens K."/>
            <person name="Taylor K."/>
            <person name="Taylor R.G."/>
            <person name="Tivey A."/>
            <person name="Walsh S.V."/>
            <person name="Warren T."/>
            <person name="Whitehead S."/>
            <person name="Woodward J.R."/>
            <person name="Volckaert G."/>
            <person name="Aert R."/>
            <person name="Robben J."/>
            <person name="Grymonprez B."/>
            <person name="Weltjens I."/>
            <person name="Vanstreels E."/>
            <person name="Rieger M."/>
            <person name="Schaefer M."/>
            <person name="Mueller-Auer S."/>
            <person name="Gabel C."/>
            <person name="Fuchs M."/>
            <person name="Duesterhoeft A."/>
            <person name="Fritzc C."/>
            <person name="Holzer E."/>
            <person name="Moestl D."/>
            <person name="Hilbert H."/>
            <person name="Borzym K."/>
            <person name="Langer I."/>
            <person name="Beck A."/>
            <person name="Lehrach H."/>
            <person name="Reinhardt R."/>
            <person name="Pohl T.M."/>
            <person name="Eger P."/>
            <person name="Zimmermann W."/>
            <person name="Wedler H."/>
            <person name="Wambutt R."/>
            <person name="Purnelle B."/>
            <person name="Goffeau A."/>
            <person name="Cadieu E."/>
            <person name="Dreano S."/>
            <person name="Gloux S."/>
            <person name="Lelaure V."/>
            <person name="Mottier S."/>
            <person name="Galibert F."/>
            <person name="Aves S.J."/>
            <person name="Xiang Z."/>
            <person name="Hunt C."/>
            <person name="Moore K."/>
            <person name="Hurst S.M."/>
            <person name="Lucas M."/>
            <person name="Rochet M."/>
            <person name="Gaillardin C."/>
            <person name="Tallada V.A."/>
            <person name="Garzon A."/>
            <person name="Thode G."/>
            <person name="Daga R.R."/>
            <person name="Cruzado L."/>
            <person name="Jimenez J."/>
            <person name="Sanchez M."/>
            <person name="del Rey F."/>
            <person name="Benito J."/>
            <person name="Dominguez A."/>
            <person name="Revuelta J.L."/>
            <person name="Moreno S."/>
            <person name="Armstrong J."/>
            <person name="Forsburg S.L."/>
            <person name="Cerutti L."/>
            <person name="Lowe T."/>
            <person name="McCombie W.R."/>
            <person name="Paulsen I."/>
            <person name="Potashkin J."/>
            <person name="Shpakovski G.V."/>
            <person name="Ussery D."/>
            <person name="Barrell B.G."/>
            <person name="Nurse P."/>
        </authorList>
    </citation>
    <scope>NUCLEOTIDE SEQUENCE [LARGE SCALE GENOMIC DNA]</scope>
    <source>
        <strain>972 / ATCC 24843</strain>
    </source>
</reference>
<reference key="4">
    <citation type="journal article" date="2008" name="J. Proteome Res.">
        <title>Phosphoproteome analysis of fission yeast.</title>
        <authorList>
            <person name="Wilson-Grady J.T."/>
            <person name="Villen J."/>
            <person name="Gygi S.P."/>
        </authorList>
    </citation>
    <scope>PHOSPHORYLATION [LARGE SCALE ANALYSIS] AT SER-159; SER-161; SER-1438 AND SER-1441</scope>
    <scope>IDENTIFICATION BY MASS SPECTROMETRY</scope>
</reference>
<feature type="chain" id="PRO_0000073929" description="DNA-directed RNA polymerase I subunit rpa1">
    <location>
        <begin position="1"/>
        <end position="1689"/>
    </location>
</feature>
<feature type="region of interest" description="Disordered" evidence="3">
    <location>
        <begin position="269"/>
        <end position="295"/>
    </location>
</feature>
<feature type="region of interest" description="Bridging helix" evidence="1">
    <location>
        <begin position="1005"/>
        <end position="1017"/>
    </location>
</feature>
<feature type="region of interest" description="Disordered" evidence="3">
    <location>
        <begin position="1346"/>
        <end position="1440"/>
    </location>
</feature>
<feature type="compositionally biased region" description="Basic and acidic residues" evidence="3">
    <location>
        <begin position="269"/>
        <end position="280"/>
    </location>
</feature>
<feature type="compositionally biased region" description="Acidic residues" evidence="3">
    <location>
        <begin position="281"/>
        <end position="295"/>
    </location>
</feature>
<feature type="binding site" evidence="1">
    <location>
        <position position="63"/>
    </location>
    <ligand>
        <name>Zn(2+)</name>
        <dbReference type="ChEBI" id="CHEBI:29105"/>
    </ligand>
</feature>
<feature type="binding site" evidence="1">
    <location>
        <position position="66"/>
    </location>
    <ligand>
        <name>Zn(2+)</name>
        <dbReference type="ChEBI" id="CHEBI:29105"/>
    </ligand>
</feature>
<feature type="binding site" evidence="1">
    <location>
        <position position="73"/>
    </location>
    <ligand>
        <name>Zn(2+)</name>
        <dbReference type="ChEBI" id="CHEBI:29105"/>
    </ligand>
</feature>
<feature type="binding site" evidence="1">
    <location>
        <position position="76"/>
    </location>
    <ligand>
        <name>Zn(2+)</name>
        <dbReference type="ChEBI" id="CHEBI:29105"/>
    </ligand>
</feature>
<feature type="binding site" evidence="1">
    <location>
        <position position="643"/>
    </location>
    <ligand>
        <name>Mg(2+)</name>
        <dbReference type="ChEBI" id="CHEBI:18420"/>
        <note>catalytic</note>
    </ligand>
</feature>
<feature type="binding site" evidence="1">
    <location>
        <position position="645"/>
    </location>
    <ligand>
        <name>Mg(2+)</name>
        <dbReference type="ChEBI" id="CHEBI:18420"/>
        <note>catalytic</note>
    </ligand>
</feature>
<feature type="binding site" evidence="1">
    <location>
        <position position="647"/>
    </location>
    <ligand>
        <name>Mg(2+)</name>
        <dbReference type="ChEBI" id="CHEBI:18420"/>
        <note>catalytic</note>
    </ligand>
</feature>
<feature type="modified residue" description="Phosphoserine" evidence="4">
    <location>
        <position position="159"/>
    </location>
</feature>
<feature type="modified residue" description="Phosphoserine" evidence="4">
    <location>
        <position position="161"/>
    </location>
</feature>
<feature type="modified residue" description="Phosphoserine" evidence="4">
    <location>
        <position position="1438"/>
    </location>
</feature>
<feature type="modified residue" description="Phosphoserine" evidence="4">
    <location>
        <position position="1441"/>
    </location>
</feature>
<feature type="sequence conflict" description="In Ref. 1; CAA32887." evidence="6" ref="1">
    <original>D</original>
    <variation>A</variation>
    <location>
        <position position="69"/>
    </location>
</feature>
<feature type="sequence conflict" description="In Ref. 1; CAA32887." evidence="6" ref="1">
    <original>I</original>
    <variation>S</variation>
    <location>
        <position position="84"/>
    </location>
</feature>
<feature type="sequence conflict" description="In Ref. 1; CAA32887." evidence="6" ref="1">
    <original>T</original>
    <variation>I</variation>
    <location>
        <position position="704"/>
    </location>
</feature>
<feature type="sequence conflict" description="In Ref. 1; CAA32887." evidence="6" ref="1">
    <original>A</original>
    <variation>T</variation>
    <location>
        <position position="1581"/>
    </location>
</feature>
<feature type="sequence conflict" description="In Ref. 1; CAA32887." evidence="6" ref="1">
    <original>T</original>
    <variation>N</variation>
    <location>
        <position position="1681"/>
    </location>
</feature>
<gene>
    <name type="primary">rpa1</name>
    <name type="synonym">nuc1</name>
    <name type="ORF">SPBC4C3.05c</name>
</gene>
<evidence type="ECO:0000250" key="1"/>
<evidence type="ECO:0000250" key="2">
    <source>
        <dbReference type="UniProtKB" id="P10964"/>
    </source>
</evidence>
<evidence type="ECO:0000256" key="3">
    <source>
        <dbReference type="SAM" id="MobiDB-lite"/>
    </source>
</evidence>
<evidence type="ECO:0000269" key="4">
    <source>
    </source>
</evidence>
<evidence type="ECO:0000269" key="5">
    <source>
    </source>
</evidence>
<evidence type="ECO:0000305" key="6"/>
<keyword id="KW-0002">3D-structure</keyword>
<keyword id="KW-0240">DNA-directed RNA polymerase</keyword>
<keyword id="KW-0460">Magnesium</keyword>
<keyword id="KW-0479">Metal-binding</keyword>
<keyword id="KW-0548">Nucleotidyltransferase</keyword>
<keyword id="KW-0539">Nucleus</keyword>
<keyword id="KW-0597">Phosphoprotein</keyword>
<keyword id="KW-1185">Reference proteome</keyword>
<keyword id="KW-0804">Transcription</keyword>
<keyword id="KW-0808">Transferase</keyword>
<keyword id="KW-0862">Zinc</keyword>
<accession>P15398</accession>
<name>RPA1_SCHPO</name>
<comment type="function">
    <text evidence="2">DNA-dependent RNA polymerase catalyzes the transcription of DNA into RNA using the four ribonucleoside triphosphates as substrates. Largest and catalytic core component of RNA polymerase I which synthesizes ribosomal RNA precursors. Forms the polymerase active center together with the second largest subunit. A single stranded DNA template strand of the promoter is positioned within the central active site cleft of Pol I. A bridging helix emanates from RPA1 and crosses the cleft near the catalytic site and is thought to promote translocation of Pol I by acting as a ratchet that moves the RNA-DNA hybrid through the active site by switching from straight to bent conformations at each step of nucleotide addition (By similarity).</text>
</comment>
<comment type="catalytic activity">
    <reaction>
        <text>RNA(n) + a ribonucleoside 5'-triphosphate = RNA(n+1) + diphosphate</text>
        <dbReference type="Rhea" id="RHEA:21248"/>
        <dbReference type="Rhea" id="RHEA-COMP:14527"/>
        <dbReference type="Rhea" id="RHEA-COMP:17342"/>
        <dbReference type="ChEBI" id="CHEBI:33019"/>
        <dbReference type="ChEBI" id="CHEBI:61557"/>
        <dbReference type="ChEBI" id="CHEBI:140395"/>
        <dbReference type="EC" id="2.7.7.6"/>
    </reaction>
</comment>
<comment type="subunit">
    <text evidence="1">Component of the RNA polymerase I (Pol I) complex consisting of at least 13 subunits.</text>
</comment>
<comment type="subcellular location">
    <subcellularLocation>
        <location evidence="5">Nucleus</location>
        <location evidence="5">Nucleolus</location>
    </subcellularLocation>
</comment>
<comment type="similarity">
    <text evidence="6">Belongs to the RNA polymerase beta' chain family.</text>
</comment>
<proteinExistence type="evidence at protein level"/>
<dbReference type="EC" id="2.7.7.6"/>
<dbReference type="EMBL" id="X14783">
    <property type="protein sequence ID" value="CAA32887.1"/>
    <property type="molecule type" value="Genomic_DNA"/>
</dbReference>
<dbReference type="EMBL" id="M37411">
    <property type="protein sequence ID" value="AAA35326.1"/>
    <property type="molecule type" value="Genomic_DNA"/>
</dbReference>
<dbReference type="EMBL" id="CU329671">
    <property type="protein sequence ID" value="CAA16827.1"/>
    <property type="molecule type" value="Genomic_DNA"/>
</dbReference>
<dbReference type="PIR" id="JS0080">
    <property type="entry name" value="JS0080"/>
</dbReference>
<dbReference type="RefSeq" id="NP_596300.1">
    <property type="nucleotide sequence ID" value="NM_001022221.2"/>
</dbReference>
<dbReference type="PDB" id="7AOC">
    <property type="method" value="EM"/>
    <property type="resolution" value="3.84 A"/>
    <property type="chains" value="A=1-1689"/>
</dbReference>
<dbReference type="PDB" id="7AOD">
    <property type="method" value="EM"/>
    <property type="resolution" value="4.50 A"/>
    <property type="chains" value="A/M=1-1689"/>
</dbReference>
<dbReference type="PDB" id="7AOE">
    <property type="method" value="EM"/>
    <property type="resolution" value="3.90 A"/>
    <property type="chains" value="A=1-1689"/>
</dbReference>
<dbReference type="PDBsum" id="7AOC"/>
<dbReference type="PDBsum" id="7AOD"/>
<dbReference type="PDBsum" id="7AOE"/>
<dbReference type="EMDB" id="EMD-11840"/>
<dbReference type="EMDB" id="EMD-11841"/>
<dbReference type="EMDB" id="EMD-11842"/>
<dbReference type="SMR" id="P15398"/>
<dbReference type="BioGRID" id="277390">
    <property type="interactions" value="20"/>
</dbReference>
<dbReference type="ComplexPortal" id="CPX-8907">
    <property type="entry name" value="DNA-directed RNA polymerase I complex"/>
</dbReference>
<dbReference type="FunCoup" id="P15398">
    <property type="interactions" value="604"/>
</dbReference>
<dbReference type="IntAct" id="P15398">
    <property type="interactions" value="1"/>
</dbReference>
<dbReference type="STRING" id="284812.P15398"/>
<dbReference type="iPTMnet" id="P15398"/>
<dbReference type="PaxDb" id="4896-SPBC4C3.05c.1"/>
<dbReference type="EnsemblFungi" id="SPBC4C3.05c.1">
    <property type="protein sequence ID" value="SPBC4C3.05c.1:pep"/>
    <property type="gene ID" value="SPBC4C3.05c"/>
</dbReference>
<dbReference type="GeneID" id="2540873"/>
<dbReference type="KEGG" id="spo:2540873"/>
<dbReference type="PomBase" id="SPBC4C3.05c"/>
<dbReference type="VEuPathDB" id="FungiDB:SPBC4C3.05c"/>
<dbReference type="eggNOG" id="KOG0262">
    <property type="taxonomic scope" value="Eukaryota"/>
</dbReference>
<dbReference type="HOGENOM" id="CLU_000487_2_4_1"/>
<dbReference type="InParanoid" id="P15398"/>
<dbReference type="OMA" id="NREDYQQ"/>
<dbReference type="PhylomeDB" id="P15398"/>
<dbReference type="Reactome" id="R-SPO-73762">
    <property type="pathway name" value="RNA Polymerase I Transcription Initiation"/>
</dbReference>
<dbReference type="Reactome" id="R-SPO-73772">
    <property type="pathway name" value="RNA Polymerase I Promoter Escape"/>
</dbReference>
<dbReference type="PRO" id="PR:P15398"/>
<dbReference type="Proteomes" id="UP000002485">
    <property type="component" value="Chromosome II"/>
</dbReference>
<dbReference type="GO" id="GO:0005829">
    <property type="term" value="C:cytosol"/>
    <property type="evidence" value="ECO:0007005"/>
    <property type="project" value="PomBase"/>
</dbReference>
<dbReference type="GO" id="GO:0005739">
    <property type="term" value="C:mitochondrion"/>
    <property type="evidence" value="ECO:0007669"/>
    <property type="project" value="GOC"/>
</dbReference>
<dbReference type="GO" id="GO:0005730">
    <property type="term" value="C:nucleolus"/>
    <property type="evidence" value="ECO:0000314"/>
    <property type="project" value="PomBase"/>
</dbReference>
<dbReference type="GO" id="GO:0005736">
    <property type="term" value="C:RNA polymerase I complex"/>
    <property type="evidence" value="ECO:0000314"/>
    <property type="project" value="PomBase"/>
</dbReference>
<dbReference type="GO" id="GO:0003677">
    <property type="term" value="F:DNA binding"/>
    <property type="evidence" value="ECO:0007669"/>
    <property type="project" value="InterPro"/>
</dbReference>
<dbReference type="GO" id="GO:0003899">
    <property type="term" value="F:DNA-directed RNA polymerase activity"/>
    <property type="evidence" value="ECO:0007669"/>
    <property type="project" value="UniProtKB-EC"/>
</dbReference>
<dbReference type="GO" id="GO:0046872">
    <property type="term" value="F:metal ion binding"/>
    <property type="evidence" value="ECO:0007669"/>
    <property type="project" value="UniProtKB-KW"/>
</dbReference>
<dbReference type="GO" id="GO:0006362">
    <property type="term" value="P:transcription elongation by RNA polymerase I"/>
    <property type="evidence" value="ECO:0000269"/>
    <property type="project" value="PomBase"/>
</dbReference>
<dbReference type="CDD" id="cd02735">
    <property type="entry name" value="RNAP_I_Rpa1_C"/>
    <property type="match status" value="1"/>
</dbReference>
<dbReference type="CDD" id="cd01435">
    <property type="entry name" value="RNAP_I_RPA1_N"/>
    <property type="match status" value="1"/>
</dbReference>
<dbReference type="FunFam" id="2.40.40.20:FF:000019">
    <property type="entry name" value="DNA-directed RNA polymerase II subunit RPB1"/>
    <property type="match status" value="1"/>
</dbReference>
<dbReference type="FunFam" id="1.10.150.390:FF:000005">
    <property type="entry name" value="DNA-directed RNA polymerase subunit"/>
    <property type="match status" value="1"/>
</dbReference>
<dbReference type="FunFam" id="1.10.274.100:FF:000006">
    <property type="entry name" value="DNA-directed RNA polymerase subunit"/>
    <property type="match status" value="1"/>
</dbReference>
<dbReference type="FunFam" id="1.10.357.120:FF:000002">
    <property type="entry name" value="DNA-directed RNA polymerase subunit"/>
    <property type="match status" value="1"/>
</dbReference>
<dbReference type="FunFam" id="3.30.1490.180:FF:000003">
    <property type="entry name" value="DNA-directed RNA polymerase subunit"/>
    <property type="match status" value="1"/>
</dbReference>
<dbReference type="FunFam" id="4.10.860.120:FF:000006">
    <property type="entry name" value="DNA-directed RNA polymerase subunit"/>
    <property type="match status" value="1"/>
</dbReference>
<dbReference type="Gene3D" id="1.10.132.30">
    <property type="match status" value="1"/>
</dbReference>
<dbReference type="Gene3D" id="1.10.150.390">
    <property type="match status" value="1"/>
</dbReference>
<dbReference type="Gene3D" id="1.10.357.120">
    <property type="match status" value="1"/>
</dbReference>
<dbReference type="Gene3D" id="2.40.40.20">
    <property type="match status" value="1"/>
</dbReference>
<dbReference type="Gene3D" id="3.30.70.2850">
    <property type="match status" value="1"/>
</dbReference>
<dbReference type="Gene3D" id="6.10.250.2940">
    <property type="match status" value="1"/>
</dbReference>
<dbReference type="Gene3D" id="3.30.1490.180">
    <property type="entry name" value="RNA polymerase ii"/>
    <property type="match status" value="1"/>
</dbReference>
<dbReference type="Gene3D" id="4.10.860.120">
    <property type="entry name" value="RNA polymerase II, clamp domain"/>
    <property type="match status" value="1"/>
</dbReference>
<dbReference type="Gene3D" id="1.10.274.100">
    <property type="entry name" value="RNA polymerase Rpb1, domain 3"/>
    <property type="match status" value="1"/>
</dbReference>
<dbReference type="InterPro" id="IPR047107">
    <property type="entry name" value="DNA-dir_RNA_pol1_lsu_C"/>
</dbReference>
<dbReference type="InterPro" id="IPR015699">
    <property type="entry name" value="DNA-dir_RNA_pol1_lsu_N"/>
</dbReference>
<dbReference type="InterPro" id="IPR045867">
    <property type="entry name" value="DNA-dir_RpoC_beta_prime"/>
</dbReference>
<dbReference type="InterPro" id="IPR000722">
    <property type="entry name" value="RNA_pol_asu"/>
</dbReference>
<dbReference type="InterPro" id="IPR006592">
    <property type="entry name" value="RNA_pol_N"/>
</dbReference>
<dbReference type="InterPro" id="IPR007080">
    <property type="entry name" value="RNA_pol_Rpb1_1"/>
</dbReference>
<dbReference type="InterPro" id="IPR007066">
    <property type="entry name" value="RNA_pol_Rpb1_3"/>
</dbReference>
<dbReference type="InterPro" id="IPR042102">
    <property type="entry name" value="RNA_pol_Rpb1_3_sf"/>
</dbReference>
<dbReference type="InterPro" id="IPR007083">
    <property type="entry name" value="RNA_pol_Rpb1_4"/>
</dbReference>
<dbReference type="InterPro" id="IPR007081">
    <property type="entry name" value="RNA_pol_Rpb1_5"/>
</dbReference>
<dbReference type="InterPro" id="IPR044893">
    <property type="entry name" value="RNA_pol_Rpb1_clamp_domain"/>
</dbReference>
<dbReference type="InterPro" id="IPR038120">
    <property type="entry name" value="Rpb1_funnel_sf"/>
</dbReference>
<dbReference type="PANTHER" id="PTHR19376">
    <property type="entry name" value="DNA-DIRECTED RNA POLYMERASE"/>
    <property type="match status" value="1"/>
</dbReference>
<dbReference type="PANTHER" id="PTHR19376:SF11">
    <property type="entry name" value="DNA-DIRECTED RNA POLYMERASE I SUBUNIT RPA1"/>
    <property type="match status" value="1"/>
</dbReference>
<dbReference type="Pfam" id="PF04997">
    <property type="entry name" value="RNA_pol_Rpb1_1"/>
    <property type="match status" value="1"/>
</dbReference>
<dbReference type="Pfam" id="PF00623">
    <property type="entry name" value="RNA_pol_Rpb1_2"/>
    <property type="match status" value="1"/>
</dbReference>
<dbReference type="Pfam" id="PF04983">
    <property type="entry name" value="RNA_pol_Rpb1_3"/>
    <property type="match status" value="1"/>
</dbReference>
<dbReference type="Pfam" id="PF05000">
    <property type="entry name" value="RNA_pol_Rpb1_4"/>
    <property type="match status" value="1"/>
</dbReference>
<dbReference type="Pfam" id="PF04998">
    <property type="entry name" value="RNA_pol_Rpb1_5"/>
    <property type="match status" value="1"/>
</dbReference>
<dbReference type="SMART" id="SM00663">
    <property type="entry name" value="RPOLA_N"/>
    <property type="match status" value="1"/>
</dbReference>
<dbReference type="SUPFAM" id="SSF64484">
    <property type="entry name" value="beta and beta-prime subunits of DNA dependent RNA-polymerase"/>
    <property type="match status" value="1"/>
</dbReference>
<protein>
    <recommendedName>
        <fullName>DNA-directed RNA polymerase I subunit rpa1</fullName>
        <ecNumber>2.7.7.6</ecNumber>
    </recommendedName>
    <alternativeName>
        <fullName>DNA-directed RNA polymerase I 190 kDa polypeptide</fullName>
    </alternativeName>
    <alternativeName>
        <fullName>DNA-directed RNA polymerase I largest subunit</fullName>
    </alternativeName>
</protein>